<name>SYY_BRADU</name>
<accession>Q89M63</accession>
<evidence type="ECO:0000255" key="1">
    <source>
        <dbReference type="HAMAP-Rule" id="MF_02006"/>
    </source>
</evidence>
<dbReference type="EC" id="6.1.1.1" evidence="1"/>
<dbReference type="EMBL" id="BA000040">
    <property type="protein sequence ID" value="BAC49595.1"/>
    <property type="molecule type" value="Genomic_DNA"/>
</dbReference>
<dbReference type="RefSeq" id="NP_770970.1">
    <property type="nucleotide sequence ID" value="NC_004463.1"/>
</dbReference>
<dbReference type="RefSeq" id="WP_011087103.1">
    <property type="nucleotide sequence ID" value="NC_004463.1"/>
</dbReference>
<dbReference type="SMR" id="Q89M63"/>
<dbReference type="FunCoup" id="Q89M63">
    <property type="interactions" value="713"/>
</dbReference>
<dbReference type="STRING" id="224911.AAV28_18710"/>
<dbReference type="EnsemblBacteria" id="BAC49595">
    <property type="protein sequence ID" value="BAC49595"/>
    <property type="gene ID" value="BAC49595"/>
</dbReference>
<dbReference type="GeneID" id="46491326"/>
<dbReference type="KEGG" id="bja:bll4330"/>
<dbReference type="PATRIC" id="fig|224911.44.peg.4074"/>
<dbReference type="eggNOG" id="COG0162">
    <property type="taxonomic scope" value="Bacteria"/>
</dbReference>
<dbReference type="HOGENOM" id="CLU_024003_0_3_5"/>
<dbReference type="InParanoid" id="Q89M63"/>
<dbReference type="OrthoDB" id="9804243at2"/>
<dbReference type="PhylomeDB" id="Q89M63"/>
<dbReference type="Proteomes" id="UP000002526">
    <property type="component" value="Chromosome"/>
</dbReference>
<dbReference type="GO" id="GO:0005829">
    <property type="term" value="C:cytosol"/>
    <property type="evidence" value="ECO:0000318"/>
    <property type="project" value="GO_Central"/>
</dbReference>
<dbReference type="GO" id="GO:0005524">
    <property type="term" value="F:ATP binding"/>
    <property type="evidence" value="ECO:0007669"/>
    <property type="project" value="UniProtKB-UniRule"/>
</dbReference>
<dbReference type="GO" id="GO:0003723">
    <property type="term" value="F:RNA binding"/>
    <property type="evidence" value="ECO:0007669"/>
    <property type="project" value="UniProtKB-KW"/>
</dbReference>
<dbReference type="GO" id="GO:0004831">
    <property type="term" value="F:tyrosine-tRNA ligase activity"/>
    <property type="evidence" value="ECO:0000318"/>
    <property type="project" value="GO_Central"/>
</dbReference>
<dbReference type="GO" id="GO:0043039">
    <property type="term" value="P:tRNA aminoacylation"/>
    <property type="evidence" value="ECO:0000318"/>
    <property type="project" value="GO_Central"/>
</dbReference>
<dbReference type="GO" id="GO:0006437">
    <property type="term" value="P:tyrosyl-tRNA aminoacylation"/>
    <property type="evidence" value="ECO:0007669"/>
    <property type="project" value="UniProtKB-UniRule"/>
</dbReference>
<dbReference type="CDD" id="cd00165">
    <property type="entry name" value="S4"/>
    <property type="match status" value="1"/>
</dbReference>
<dbReference type="CDD" id="cd00805">
    <property type="entry name" value="TyrRS_core"/>
    <property type="match status" value="1"/>
</dbReference>
<dbReference type="FunFam" id="1.10.240.10:FF:000001">
    <property type="entry name" value="Tyrosine--tRNA ligase"/>
    <property type="match status" value="1"/>
</dbReference>
<dbReference type="FunFam" id="3.40.50.620:FF:000008">
    <property type="entry name" value="Tyrosine--tRNA ligase"/>
    <property type="match status" value="1"/>
</dbReference>
<dbReference type="Gene3D" id="3.40.50.620">
    <property type="entry name" value="HUPs"/>
    <property type="match status" value="1"/>
</dbReference>
<dbReference type="Gene3D" id="3.10.290.10">
    <property type="entry name" value="RNA-binding S4 domain"/>
    <property type="match status" value="1"/>
</dbReference>
<dbReference type="Gene3D" id="1.10.240.10">
    <property type="entry name" value="Tyrosyl-Transfer RNA Synthetase"/>
    <property type="match status" value="1"/>
</dbReference>
<dbReference type="HAMAP" id="MF_02006">
    <property type="entry name" value="Tyr_tRNA_synth_type1"/>
    <property type="match status" value="1"/>
</dbReference>
<dbReference type="InterPro" id="IPR002305">
    <property type="entry name" value="aa-tRNA-synth_Ic"/>
</dbReference>
<dbReference type="InterPro" id="IPR014729">
    <property type="entry name" value="Rossmann-like_a/b/a_fold"/>
</dbReference>
<dbReference type="InterPro" id="IPR036986">
    <property type="entry name" value="S4_RNA-bd_sf"/>
</dbReference>
<dbReference type="InterPro" id="IPR054608">
    <property type="entry name" value="SYY-like_C"/>
</dbReference>
<dbReference type="InterPro" id="IPR002307">
    <property type="entry name" value="Tyr-tRNA-ligase"/>
</dbReference>
<dbReference type="InterPro" id="IPR024088">
    <property type="entry name" value="Tyr-tRNA-ligase_bac-type"/>
</dbReference>
<dbReference type="InterPro" id="IPR024107">
    <property type="entry name" value="Tyr-tRNA-ligase_bac_1"/>
</dbReference>
<dbReference type="NCBIfam" id="TIGR00234">
    <property type="entry name" value="tyrS"/>
    <property type="match status" value="1"/>
</dbReference>
<dbReference type="PANTHER" id="PTHR11766:SF0">
    <property type="entry name" value="TYROSINE--TRNA LIGASE, MITOCHONDRIAL"/>
    <property type="match status" value="1"/>
</dbReference>
<dbReference type="PANTHER" id="PTHR11766">
    <property type="entry name" value="TYROSYL-TRNA SYNTHETASE"/>
    <property type="match status" value="1"/>
</dbReference>
<dbReference type="Pfam" id="PF22421">
    <property type="entry name" value="SYY_C-terminal"/>
    <property type="match status" value="1"/>
</dbReference>
<dbReference type="Pfam" id="PF00579">
    <property type="entry name" value="tRNA-synt_1b"/>
    <property type="match status" value="1"/>
</dbReference>
<dbReference type="PRINTS" id="PR01040">
    <property type="entry name" value="TRNASYNTHTYR"/>
</dbReference>
<dbReference type="SUPFAM" id="SSF55174">
    <property type="entry name" value="Alpha-L RNA-binding motif"/>
    <property type="match status" value="1"/>
</dbReference>
<dbReference type="SUPFAM" id="SSF52374">
    <property type="entry name" value="Nucleotidylyl transferase"/>
    <property type="match status" value="1"/>
</dbReference>
<dbReference type="PROSITE" id="PS50889">
    <property type="entry name" value="S4"/>
    <property type="match status" value="1"/>
</dbReference>
<keyword id="KW-0030">Aminoacyl-tRNA synthetase</keyword>
<keyword id="KW-0067">ATP-binding</keyword>
<keyword id="KW-0963">Cytoplasm</keyword>
<keyword id="KW-0436">Ligase</keyword>
<keyword id="KW-0547">Nucleotide-binding</keyword>
<keyword id="KW-0648">Protein biosynthesis</keyword>
<keyword id="KW-1185">Reference proteome</keyword>
<keyword id="KW-0694">RNA-binding</keyword>
<comment type="function">
    <text evidence="1">Catalyzes the attachment of tyrosine to tRNA(Tyr) in a two-step reaction: tyrosine is first activated by ATP to form Tyr-AMP and then transferred to the acceptor end of tRNA(Tyr).</text>
</comment>
<comment type="catalytic activity">
    <reaction evidence="1">
        <text>tRNA(Tyr) + L-tyrosine + ATP = L-tyrosyl-tRNA(Tyr) + AMP + diphosphate + H(+)</text>
        <dbReference type="Rhea" id="RHEA:10220"/>
        <dbReference type="Rhea" id="RHEA-COMP:9706"/>
        <dbReference type="Rhea" id="RHEA-COMP:9707"/>
        <dbReference type="ChEBI" id="CHEBI:15378"/>
        <dbReference type="ChEBI" id="CHEBI:30616"/>
        <dbReference type="ChEBI" id="CHEBI:33019"/>
        <dbReference type="ChEBI" id="CHEBI:58315"/>
        <dbReference type="ChEBI" id="CHEBI:78442"/>
        <dbReference type="ChEBI" id="CHEBI:78536"/>
        <dbReference type="ChEBI" id="CHEBI:456215"/>
        <dbReference type="EC" id="6.1.1.1"/>
    </reaction>
</comment>
<comment type="subunit">
    <text evidence="1">Homodimer.</text>
</comment>
<comment type="subcellular location">
    <subcellularLocation>
        <location evidence="1">Cytoplasm</location>
    </subcellularLocation>
</comment>
<comment type="similarity">
    <text evidence="1">Belongs to the class-I aminoacyl-tRNA synthetase family. TyrS type 1 subfamily.</text>
</comment>
<reference key="1">
    <citation type="journal article" date="2002" name="DNA Res.">
        <title>Complete genomic sequence of nitrogen-fixing symbiotic bacterium Bradyrhizobium japonicum USDA110.</title>
        <authorList>
            <person name="Kaneko T."/>
            <person name="Nakamura Y."/>
            <person name="Sato S."/>
            <person name="Minamisawa K."/>
            <person name="Uchiumi T."/>
            <person name="Sasamoto S."/>
            <person name="Watanabe A."/>
            <person name="Idesawa K."/>
            <person name="Iriguchi M."/>
            <person name="Kawashima K."/>
            <person name="Kohara M."/>
            <person name="Matsumoto M."/>
            <person name="Shimpo S."/>
            <person name="Tsuruoka H."/>
            <person name="Wada T."/>
            <person name="Yamada M."/>
            <person name="Tabata S."/>
        </authorList>
    </citation>
    <scope>NUCLEOTIDE SEQUENCE [LARGE SCALE GENOMIC DNA]</scope>
    <source>
        <strain>JCM 10833 / BCRC 13528 / IAM 13628 / NBRC 14792 / USDA 110</strain>
    </source>
</reference>
<gene>
    <name evidence="1" type="primary">tyrS</name>
    <name type="ordered locus">bll4330</name>
</gene>
<sequence>MTAFKSDFLNILQERGFIHQCSDFEGLDALAAKGEATAYVGYDCTARSLHIGNYLTMMMLHWLQQSGNKPITLMGGGTTMVGDPSGKDETRAMRTVAEIEANKESIRGVFAKVLRYGDGKSDAVMLDNAEWLTKLNWIEMLRDVGRHFSVNRMLTMDSVRLRLEREQEMSFIEFNYMVCQAYDFVELAKRTGCKLQMGGSDQWGNIIMGVDLGRRMGTHQLFALTTPLLTTASGAKMGKTAQGAVWLNADQFSPYDFWQYWRNTEDADVGKFLKLFTTLPMSEIGKLEALGGSEINEAKKVLATEATALLHGRDAANEAAETARRTFEEGALAESLPTVEIPRGELDAGFGVLNAFVKAGLVASNGEARRQIKGGGLRVNDEPVTDDKMALSAAHLTPEGVIKLSFGKKKHILIKPA</sequence>
<organism>
    <name type="scientific">Bradyrhizobium diazoefficiens (strain JCM 10833 / BCRC 13528 / IAM 13628 / NBRC 14792 / USDA 110)</name>
    <dbReference type="NCBI Taxonomy" id="224911"/>
    <lineage>
        <taxon>Bacteria</taxon>
        <taxon>Pseudomonadati</taxon>
        <taxon>Pseudomonadota</taxon>
        <taxon>Alphaproteobacteria</taxon>
        <taxon>Hyphomicrobiales</taxon>
        <taxon>Nitrobacteraceae</taxon>
        <taxon>Bradyrhizobium</taxon>
    </lineage>
</organism>
<feature type="chain" id="PRO_0000234687" description="Tyrosine--tRNA ligase">
    <location>
        <begin position="1"/>
        <end position="417"/>
    </location>
</feature>
<feature type="domain" description="S4 RNA-binding" evidence="1">
    <location>
        <begin position="350"/>
        <end position="417"/>
    </location>
</feature>
<feature type="short sequence motif" description="'HIGH' region">
    <location>
        <begin position="44"/>
        <end position="53"/>
    </location>
</feature>
<feature type="short sequence motif" description="'KMSKS' region">
    <location>
        <begin position="236"/>
        <end position="240"/>
    </location>
</feature>
<feature type="binding site" evidence="1">
    <location>
        <position position="39"/>
    </location>
    <ligand>
        <name>L-tyrosine</name>
        <dbReference type="ChEBI" id="CHEBI:58315"/>
    </ligand>
</feature>
<feature type="binding site" evidence="1">
    <location>
        <position position="176"/>
    </location>
    <ligand>
        <name>L-tyrosine</name>
        <dbReference type="ChEBI" id="CHEBI:58315"/>
    </ligand>
</feature>
<feature type="binding site" evidence="1">
    <location>
        <position position="180"/>
    </location>
    <ligand>
        <name>L-tyrosine</name>
        <dbReference type="ChEBI" id="CHEBI:58315"/>
    </ligand>
</feature>
<feature type="binding site" evidence="1">
    <location>
        <position position="239"/>
    </location>
    <ligand>
        <name>ATP</name>
        <dbReference type="ChEBI" id="CHEBI:30616"/>
    </ligand>
</feature>
<proteinExistence type="inferred from homology"/>
<protein>
    <recommendedName>
        <fullName evidence="1">Tyrosine--tRNA ligase</fullName>
        <ecNumber evidence="1">6.1.1.1</ecNumber>
    </recommendedName>
    <alternativeName>
        <fullName evidence="1">Tyrosyl-tRNA synthetase</fullName>
        <shortName evidence="1">TyrRS</shortName>
    </alternativeName>
</protein>